<organism>
    <name type="scientific">Arabidopsis thaliana</name>
    <name type="common">Mouse-ear cress</name>
    <dbReference type="NCBI Taxonomy" id="3702"/>
    <lineage>
        <taxon>Eukaryota</taxon>
        <taxon>Viridiplantae</taxon>
        <taxon>Streptophyta</taxon>
        <taxon>Embryophyta</taxon>
        <taxon>Tracheophyta</taxon>
        <taxon>Spermatophyta</taxon>
        <taxon>Magnoliopsida</taxon>
        <taxon>eudicotyledons</taxon>
        <taxon>Gunneridae</taxon>
        <taxon>Pentapetalae</taxon>
        <taxon>rosids</taxon>
        <taxon>malvids</taxon>
        <taxon>Brassicales</taxon>
        <taxon>Brassicaceae</taxon>
        <taxon>Camelineae</taxon>
        <taxon>Arabidopsis</taxon>
    </lineage>
</organism>
<feature type="chain" id="PRO_0000274959" description="F-box/LRR-repeat protein At4g14103">
    <location>
        <begin position="1"/>
        <end position="381"/>
    </location>
</feature>
<feature type="domain" description="F-box" evidence="1">
    <location>
        <begin position="7"/>
        <end position="60"/>
    </location>
</feature>
<feature type="repeat" description="LRR 1">
    <location>
        <begin position="118"/>
        <end position="146"/>
    </location>
</feature>
<feature type="repeat" description="LRR 2">
    <location>
        <begin position="171"/>
        <end position="196"/>
    </location>
</feature>
<feature type="repeat" description="LRR 3">
    <location>
        <begin position="218"/>
        <end position="243"/>
    </location>
</feature>
<feature type="repeat" description="LRR 4">
    <location>
        <begin position="249"/>
        <end position="274"/>
    </location>
</feature>
<feature type="repeat" description="LRR 5">
    <location>
        <begin position="299"/>
        <end position="330"/>
    </location>
</feature>
<feature type="repeat" description="LRR 6">
    <location>
        <begin position="331"/>
        <end position="356"/>
    </location>
</feature>
<name>FBL75_ARATH</name>
<comment type="alternative products">
    <event type="alternative splicing"/>
    <isoform>
        <id>Q8L7H1-1</id>
        <name>1</name>
        <sequence type="displayed"/>
    </isoform>
    <text>A number of isoforms are produced. According to EST sequences.</text>
</comment>
<comment type="sequence caution" evidence="2">
    <conflict type="erroneous gene model prediction">
        <sequence resource="EMBL-CDS" id="CAB10188"/>
    </conflict>
    <text>The predicted gene At4g14090 has been split into 3 genes: At4g14096, At4g14100 and At4g14103.</text>
</comment>
<comment type="sequence caution" evidence="2">
    <conflict type="erroneous gene model prediction">
        <sequence resource="EMBL-CDS" id="CAB78451"/>
    </conflict>
    <text>The predicted gene At4g14090 has been split into 3 genes: At4g14096, At4g14100 and At4g14103.</text>
</comment>
<dbReference type="EMBL" id="Z97335">
    <property type="protein sequence ID" value="CAB10188.1"/>
    <property type="status" value="ALT_SEQ"/>
    <property type="molecule type" value="Genomic_DNA"/>
</dbReference>
<dbReference type="EMBL" id="AL161538">
    <property type="protein sequence ID" value="CAB78451.1"/>
    <property type="status" value="ALT_SEQ"/>
    <property type="molecule type" value="Genomic_DNA"/>
</dbReference>
<dbReference type="EMBL" id="CP002687">
    <property type="protein sequence ID" value="AEE83372.1"/>
    <property type="molecule type" value="Genomic_DNA"/>
</dbReference>
<dbReference type="EMBL" id="CP002687">
    <property type="protein sequence ID" value="ANM67576.1"/>
    <property type="molecule type" value="Genomic_DNA"/>
</dbReference>
<dbReference type="EMBL" id="AY133706">
    <property type="protein sequence ID" value="AAM91640.1"/>
    <property type="molecule type" value="mRNA"/>
</dbReference>
<dbReference type="PIR" id="B71402">
    <property type="entry name" value="B71402"/>
</dbReference>
<dbReference type="RefSeq" id="NP_001319930.1">
    <molecule id="Q8L7H1-1"/>
    <property type="nucleotide sequence ID" value="NM_001340901.1"/>
</dbReference>
<dbReference type="RefSeq" id="NP_567422.1">
    <molecule id="Q8L7H1-1"/>
    <property type="nucleotide sequence ID" value="NM_117487.3"/>
</dbReference>
<dbReference type="BioGRID" id="12345">
    <property type="interactions" value="1"/>
</dbReference>
<dbReference type="FunCoup" id="Q8L7H1">
    <property type="interactions" value="351"/>
</dbReference>
<dbReference type="IntAct" id="Q8L7H1">
    <property type="interactions" value="1"/>
</dbReference>
<dbReference type="STRING" id="3702.Q8L7H1"/>
<dbReference type="PaxDb" id="3702-AT4G14103.2"/>
<dbReference type="ProteomicsDB" id="222579">
    <molecule id="Q8L7H1-1"/>
</dbReference>
<dbReference type="EnsemblPlants" id="AT4G14103.1">
    <molecule id="Q8L7H1-1"/>
    <property type="protein sequence ID" value="AT4G14103.1"/>
    <property type="gene ID" value="AT4G14103"/>
</dbReference>
<dbReference type="EnsemblPlants" id="AT4G14103.3">
    <molecule id="Q8L7H1-1"/>
    <property type="protein sequence ID" value="AT4G14103.3"/>
    <property type="gene ID" value="AT4G14103"/>
</dbReference>
<dbReference type="GeneID" id="827048"/>
<dbReference type="Gramene" id="AT4G14103.1">
    <molecule id="Q8L7H1-1"/>
    <property type="protein sequence ID" value="AT4G14103.1"/>
    <property type="gene ID" value="AT4G14103"/>
</dbReference>
<dbReference type="Gramene" id="AT4G14103.3">
    <molecule id="Q8L7H1-1"/>
    <property type="protein sequence ID" value="AT4G14103.3"/>
    <property type="gene ID" value="AT4G14103"/>
</dbReference>
<dbReference type="KEGG" id="ath:AT4G14103"/>
<dbReference type="Araport" id="AT4G14103"/>
<dbReference type="TAIR" id="AT4G14103"/>
<dbReference type="eggNOG" id="ENOG502RXIZ">
    <property type="taxonomic scope" value="Eukaryota"/>
</dbReference>
<dbReference type="HOGENOM" id="CLU_010721_7_4_1"/>
<dbReference type="InParanoid" id="Q8L7H1"/>
<dbReference type="OMA" id="VELIICN"/>
<dbReference type="PhylomeDB" id="Q8L7H1"/>
<dbReference type="PRO" id="PR:Q8L7H1"/>
<dbReference type="Proteomes" id="UP000006548">
    <property type="component" value="Chromosome 4"/>
</dbReference>
<dbReference type="ExpressionAtlas" id="Q8L7H1">
    <property type="expression patterns" value="baseline and differential"/>
</dbReference>
<dbReference type="CDD" id="cd22160">
    <property type="entry name" value="F-box_AtFBL13-like"/>
    <property type="match status" value="1"/>
</dbReference>
<dbReference type="Gene3D" id="1.20.1280.50">
    <property type="match status" value="1"/>
</dbReference>
<dbReference type="Gene3D" id="3.80.10.10">
    <property type="entry name" value="Ribonuclease Inhibitor"/>
    <property type="match status" value="1"/>
</dbReference>
<dbReference type="InterPro" id="IPR036047">
    <property type="entry name" value="F-box-like_dom_sf"/>
</dbReference>
<dbReference type="InterPro" id="IPR053781">
    <property type="entry name" value="F-box_AtFBL13-like"/>
</dbReference>
<dbReference type="InterPro" id="IPR001810">
    <property type="entry name" value="F-box_dom"/>
</dbReference>
<dbReference type="InterPro" id="IPR055294">
    <property type="entry name" value="FBL60-like"/>
</dbReference>
<dbReference type="InterPro" id="IPR032675">
    <property type="entry name" value="LRR_dom_sf"/>
</dbReference>
<dbReference type="InterPro" id="IPR055411">
    <property type="entry name" value="LRR_FXL15/At3g58940/PEG3-like"/>
</dbReference>
<dbReference type="PANTHER" id="PTHR31293">
    <property type="entry name" value="RNI-LIKE SUPERFAMILY PROTEIN"/>
    <property type="match status" value="1"/>
</dbReference>
<dbReference type="PANTHER" id="PTHR31293:SF12">
    <property type="entry name" value="RNI-LIKE SUPERFAMILY PROTEIN"/>
    <property type="match status" value="1"/>
</dbReference>
<dbReference type="Pfam" id="PF00646">
    <property type="entry name" value="F-box"/>
    <property type="match status" value="1"/>
</dbReference>
<dbReference type="Pfam" id="PF24758">
    <property type="entry name" value="LRR_At5g56370"/>
    <property type="match status" value="1"/>
</dbReference>
<dbReference type="SMART" id="SM00256">
    <property type="entry name" value="FBOX"/>
    <property type="match status" value="1"/>
</dbReference>
<dbReference type="SUPFAM" id="SSF81383">
    <property type="entry name" value="F-box domain"/>
    <property type="match status" value="1"/>
</dbReference>
<dbReference type="SUPFAM" id="SSF52047">
    <property type="entry name" value="RNI-like"/>
    <property type="match status" value="1"/>
</dbReference>
<dbReference type="PROSITE" id="PS50181">
    <property type="entry name" value="FBOX"/>
    <property type="match status" value="1"/>
</dbReference>
<gene>
    <name type="ordered locus">At4g14103</name>
    <name type="ORF">dl3085w</name>
</gene>
<accession>Q8L7H1</accession>
<accession>O23269</accession>
<sequence length="381" mass="43234">MDLSGSRDVISSLPDDISSHILSFLPTKEAASTSVLSKKWRYLFAFVPNLDLDDSVYLNPENETEISTSFMDFVDRVLALQGNSPLHKFSLKIGDGIDPVRIIPWINNVLERGVSDLDLHLNLESEFLLPSQVYLCKTLVWLKLRFGLYPTIDVEDVHLPKLKTLYIEATHFEEHGVGLTKLLSGCPMLEDLVLDDISWFIWDFASVSVPTLKRLRFSWQERDEFPKSVLLDTPNLVYLKFTDTVAGKYPKVNLDSLVEAHIDLRLLKPLLINYHQGYGENDMVGNATDFIMRICNVKTLYLSANTLQVLTYSCDAIPIFNNLTHLTIESNPRVGWQSVPGLLKNSPNLETLIFQGLIHKATYRCGDVCLCKKPRKEILSC</sequence>
<keyword id="KW-0025">Alternative splicing</keyword>
<keyword id="KW-0433">Leucine-rich repeat</keyword>
<keyword id="KW-1185">Reference proteome</keyword>
<keyword id="KW-0677">Repeat</keyword>
<evidence type="ECO:0000255" key="1">
    <source>
        <dbReference type="PROSITE-ProRule" id="PRU00080"/>
    </source>
</evidence>
<evidence type="ECO:0000305" key="2"/>
<protein>
    <recommendedName>
        <fullName>F-box/LRR-repeat protein At4g14103</fullName>
    </recommendedName>
</protein>
<proteinExistence type="evidence at transcript level"/>
<reference key="1">
    <citation type="journal article" date="1998" name="Nature">
        <title>Analysis of 1.9 Mb of contiguous sequence from chromosome 4 of Arabidopsis thaliana.</title>
        <authorList>
            <person name="Bevan M."/>
            <person name="Bancroft I."/>
            <person name="Bent E."/>
            <person name="Love K."/>
            <person name="Goodman H.M."/>
            <person name="Dean C."/>
            <person name="Bergkamp R."/>
            <person name="Dirkse W."/>
            <person name="van Staveren M."/>
            <person name="Stiekema W."/>
            <person name="Drost L."/>
            <person name="Ridley P."/>
            <person name="Hudson S.-A."/>
            <person name="Patel K."/>
            <person name="Murphy G."/>
            <person name="Piffanelli P."/>
            <person name="Wedler H."/>
            <person name="Wedler E."/>
            <person name="Wambutt R."/>
            <person name="Weitzenegger T."/>
            <person name="Pohl T."/>
            <person name="Terryn N."/>
            <person name="Gielen J."/>
            <person name="Villarroel R."/>
            <person name="De Clercq R."/>
            <person name="van Montagu M."/>
            <person name="Lecharny A."/>
            <person name="Aubourg S."/>
            <person name="Gy I."/>
            <person name="Kreis M."/>
            <person name="Lao N."/>
            <person name="Kavanagh T."/>
            <person name="Hempel S."/>
            <person name="Kotter P."/>
            <person name="Entian K.-D."/>
            <person name="Rieger M."/>
            <person name="Schaefer M."/>
            <person name="Funk B."/>
            <person name="Mueller-Auer S."/>
            <person name="Silvey M."/>
            <person name="James R."/>
            <person name="Monfort A."/>
            <person name="Pons A."/>
            <person name="Puigdomenech P."/>
            <person name="Douka A."/>
            <person name="Voukelatou E."/>
            <person name="Milioni D."/>
            <person name="Hatzopoulos P."/>
            <person name="Piravandi E."/>
            <person name="Obermaier B."/>
            <person name="Hilbert H."/>
            <person name="Duesterhoeft A."/>
            <person name="Moores T."/>
            <person name="Jones J.D.G."/>
            <person name="Eneva T."/>
            <person name="Palme K."/>
            <person name="Benes V."/>
            <person name="Rechmann S."/>
            <person name="Ansorge W."/>
            <person name="Cooke R."/>
            <person name="Berger C."/>
            <person name="Delseny M."/>
            <person name="Voet M."/>
            <person name="Volckaert G."/>
            <person name="Mewes H.-W."/>
            <person name="Klosterman S."/>
            <person name="Schueller C."/>
            <person name="Chalwatzis N."/>
        </authorList>
    </citation>
    <scope>NUCLEOTIDE SEQUENCE [LARGE SCALE GENOMIC DNA]</scope>
    <source>
        <strain>cv. Columbia</strain>
    </source>
</reference>
<reference key="2">
    <citation type="journal article" date="1999" name="Nature">
        <title>Sequence and analysis of chromosome 4 of the plant Arabidopsis thaliana.</title>
        <authorList>
            <person name="Mayer K.F.X."/>
            <person name="Schueller C."/>
            <person name="Wambutt R."/>
            <person name="Murphy G."/>
            <person name="Volckaert G."/>
            <person name="Pohl T."/>
            <person name="Duesterhoeft A."/>
            <person name="Stiekema W."/>
            <person name="Entian K.-D."/>
            <person name="Terryn N."/>
            <person name="Harris B."/>
            <person name="Ansorge W."/>
            <person name="Brandt P."/>
            <person name="Grivell L.A."/>
            <person name="Rieger M."/>
            <person name="Weichselgartner M."/>
            <person name="de Simone V."/>
            <person name="Obermaier B."/>
            <person name="Mache R."/>
            <person name="Mueller M."/>
            <person name="Kreis M."/>
            <person name="Delseny M."/>
            <person name="Puigdomenech P."/>
            <person name="Watson M."/>
            <person name="Schmidtheini T."/>
            <person name="Reichert B."/>
            <person name="Portetelle D."/>
            <person name="Perez-Alonso M."/>
            <person name="Boutry M."/>
            <person name="Bancroft I."/>
            <person name="Vos P."/>
            <person name="Hoheisel J."/>
            <person name="Zimmermann W."/>
            <person name="Wedler H."/>
            <person name="Ridley P."/>
            <person name="Langham S.-A."/>
            <person name="McCullagh B."/>
            <person name="Bilham L."/>
            <person name="Robben J."/>
            <person name="van der Schueren J."/>
            <person name="Grymonprez B."/>
            <person name="Chuang Y.-J."/>
            <person name="Vandenbussche F."/>
            <person name="Braeken M."/>
            <person name="Weltjens I."/>
            <person name="Voet M."/>
            <person name="Bastiaens I."/>
            <person name="Aert R."/>
            <person name="Defoor E."/>
            <person name="Weitzenegger T."/>
            <person name="Bothe G."/>
            <person name="Ramsperger U."/>
            <person name="Hilbert H."/>
            <person name="Braun M."/>
            <person name="Holzer E."/>
            <person name="Brandt A."/>
            <person name="Peters S."/>
            <person name="van Staveren M."/>
            <person name="Dirkse W."/>
            <person name="Mooijman P."/>
            <person name="Klein Lankhorst R."/>
            <person name="Rose M."/>
            <person name="Hauf J."/>
            <person name="Koetter P."/>
            <person name="Berneiser S."/>
            <person name="Hempel S."/>
            <person name="Feldpausch M."/>
            <person name="Lamberth S."/>
            <person name="Van den Daele H."/>
            <person name="De Keyser A."/>
            <person name="Buysshaert C."/>
            <person name="Gielen J."/>
            <person name="Villarroel R."/>
            <person name="De Clercq R."/>
            <person name="van Montagu M."/>
            <person name="Rogers J."/>
            <person name="Cronin A."/>
            <person name="Quail M.A."/>
            <person name="Bray-Allen S."/>
            <person name="Clark L."/>
            <person name="Doggett J."/>
            <person name="Hall S."/>
            <person name="Kay M."/>
            <person name="Lennard N."/>
            <person name="McLay K."/>
            <person name="Mayes R."/>
            <person name="Pettett A."/>
            <person name="Rajandream M.A."/>
            <person name="Lyne M."/>
            <person name="Benes V."/>
            <person name="Rechmann S."/>
            <person name="Borkova D."/>
            <person name="Bloecker H."/>
            <person name="Scharfe M."/>
            <person name="Grimm M."/>
            <person name="Loehnert T.-H."/>
            <person name="Dose S."/>
            <person name="de Haan M."/>
            <person name="Maarse A.C."/>
            <person name="Schaefer M."/>
            <person name="Mueller-Auer S."/>
            <person name="Gabel C."/>
            <person name="Fuchs M."/>
            <person name="Fartmann B."/>
            <person name="Granderath K."/>
            <person name="Dauner D."/>
            <person name="Herzl A."/>
            <person name="Neumann S."/>
            <person name="Argiriou A."/>
            <person name="Vitale D."/>
            <person name="Liguori R."/>
            <person name="Piravandi E."/>
            <person name="Massenet O."/>
            <person name="Quigley F."/>
            <person name="Clabauld G."/>
            <person name="Muendlein A."/>
            <person name="Felber R."/>
            <person name="Schnabl S."/>
            <person name="Hiller R."/>
            <person name="Schmidt W."/>
            <person name="Lecharny A."/>
            <person name="Aubourg S."/>
            <person name="Chefdor F."/>
            <person name="Cooke R."/>
            <person name="Berger C."/>
            <person name="Monfort A."/>
            <person name="Casacuberta E."/>
            <person name="Gibbons T."/>
            <person name="Weber N."/>
            <person name="Vandenbol M."/>
            <person name="Bargues M."/>
            <person name="Terol J."/>
            <person name="Torres A."/>
            <person name="Perez-Perez A."/>
            <person name="Purnelle B."/>
            <person name="Bent E."/>
            <person name="Johnson S."/>
            <person name="Tacon D."/>
            <person name="Jesse T."/>
            <person name="Heijnen L."/>
            <person name="Schwarz S."/>
            <person name="Scholler P."/>
            <person name="Heber S."/>
            <person name="Francs P."/>
            <person name="Bielke C."/>
            <person name="Frishman D."/>
            <person name="Haase D."/>
            <person name="Lemcke K."/>
            <person name="Mewes H.-W."/>
            <person name="Stocker S."/>
            <person name="Zaccaria P."/>
            <person name="Bevan M."/>
            <person name="Wilson R.K."/>
            <person name="de la Bastide M."/>
            <person name="Habermann K."/>
            <person name="Parnell L."/>
            <person name="Dedhia N."/>
            <person name="Gnoj L."/>
            <person name="Schutz K."/>
            <person name="Huang E."/>
            <person name="Spiegel L."/>
            <person name="Sekhon M."/>
            <person name="Murray J."/>
            <person name="Sheet P."/>
            <person name="Cordes M."/>
            <person name="Abu-Threideh J."/>
            <person name="Stoneking T."/>
            <person name="Kalicki J."/>
            <person name="Graves T."/>
            <person name="Harmon G."/>
            <person name="Edwards J."/>
            <person name="Latreille P."/>
            <person name="Courtney L."/>
            <person name="Cloud J."/>
            <person name="Abbott A."/>
            <person name="Scott K."/>
            <person name="Johnson D."/>
            <person name="Minx P."/>
            <person name="Bentley D."/>
            <person name="Fulton B."/>
            <person name="Miller N."/>
            <person name="Greco T."/>
            <person name="Kemp K."/>
            <person name="Kramer J."/>
            <person name="Fulton L."/>
            <person name="Mardis E."/>
            <person name="Dante M."/>
            <person name="Pepin K."/>
            <person name="Hillier L.W."/>
            <person name="Nelson J."/>
            <person name="Spieth J."/>
            <person name="Ryan E."/>
            <person name="Andrews S."/>
            <person name="Geisel C."/>
            <person name="Layman D."/>
            <person name="Du H."/>
            <person name="Ali J."/>
            <person name="Berghoff A."/>
            <person name="Jones K."/>
            <person name="Drone K."/>
            <person name="Cotton M."/>
            <person name="Joshu C."/>
            <person name="Antonoiu B."/>
            <person name="Zidanic M."/>
            <person name="Strong C."/>
            <person name="Sun H."/>
            <person name="Lamar B."/>
            <person name="Yordan C."/>
            <person name="Ma P."/>
            <person name="Zhong J."/>
            <person name="Preston R."/>
            <person name="Vil D."/>
            <person name="Shekher M."/>
            <person name="Matero A."/>
            <person name="Shah R."/>
            <person name="Swaby I.K."/>
            <person name="O'Shaughnessy A."/>
            <person name="Rodriguez M."/>
            <person name="Hoffman J."/>
            <person name="Till S."/>
            <person name="Granat S."/>
            <person name="Shohdy N."/>
            <person name="Hasegawa A."/>
            <person name="Hameed A."/>
            <person name="Lodhi M."/>
            <person name="Johnson A."/>
            <person name="Chen E."/>
            <person name="Marra M.A."/>
            <person name="Martienssen R."/>
            <person name="McCombie W.R."/>
        </authorList>
    </citation>
    <scope>NUCLEOTIDE SEQUENCE [LARGE SCALE GENOMIC DNA]</scope>
    <source>
        <strain>cv. Columbia</strain>
    </source>
</reference>
<reference key="3">
    <citation type="journal article" date="2017" name="Plant J.">
        <title>Araport11: a complete reannotation of the Arabidopsis thaliana reference genome.</title>
        <authorList>
            <person name="Cheng C.Y."/>
            <person name="Krishnakumar V."/>
            <person name="Chan A.P."/>
            <person name="Thibaud-Nissen F."/>
            <person name="Schobel S."/>
            <person name="Town C.D."/>
        </authorList>
    </citation>
    <scope>GENOME REANNOTATION</scope>
    <source>
        <strain>cv. Columbia</strain>
    </source>
</reference>
<reference key="4">
    <citation type="journal article" date="2003" name="Science">
        <title>Empirical analysis of transcriptional activity in the Arabidopsis genome.</title>
        <authorList>
            <person name="Yamada K."/>
            <person name="Lim J."/>
            <person name="Dale J.M."/>
            <person name="Chen H."/>
            <person name="Shinn P."/>
            <person name="Palm C.J."/>
            <person name="Southwick A.M."/>
            <person name="Wu H.C."/>
            <person name="Kim C.J."/>
            <person name="Nguyen M."/>
            <person name="Pham P.K."/>
            <person name="Cheuk R.F."/>
            <person name="Karlin-Newmann G."/>
            <person name="Liu S.X."/>
            <person name="Lam B."/>
            <person name="Sakano H."/>
            <person name="Wu T."/>
            <person name="Yu G."/>
            <person name="Miranda M."/>
            <person name="Quach H.L."/>
            <person name="Tripp M."/>
            <person name="Chang C.H."/>
            <person name="Lee J.M."/>
            <person name="Toriumi M.J."/>
            <person name="Chan M.M."/>
            <person name="Tang C.C."/>
            <person name="Onodera C.S."/>
            <person name="Deng J.M."/>
            <person name="Akiyama K."/>
            <person name="Ansari Y."/>
            <person name="Arakawa T."/>
            <person name="Banh J."/>
            <person name="Banno F."/>
            <person name="Bowser L."/>
            <person name="Brooks S.Y."/>
            <person name="Carninci P."/>
            <person name="Chao Q."/>
            <person name="Choy N."/>
            <person name="Enju A."/>
            <person name="Goldsmith A.D."/>
            <person name="Gurjal M."/>
            <person name="Hansen N.F."/>
            <person name="Hayashizaki Y."/>
            <person name="Johnson-Hopson C."/>
            <person name="Hsuan V.W."/>
            <person name="Iida K."/>
            <person name="Karnes M."/>
            <person name="Khan S."/>
            <person name="Koesema E."/>
            <person name="Ishida J."/>
            <person name="Jiang P.X."/>
            <person name="Jones T."/>
            <person name="Kawai J."/>
            <person name="Kamiya A."/>
            <person name="Meyers C."/>
            <person name="Nakajima M."/>
            <person name="Narusaka M."/>
            <person name="Seki M."/>
            <person name="Sakurai T."/>
            <person name="Satou M."/>
            <person name="Tamse R."/>
            <person name="Vaysberg M."/>
            <person name="Wallender E.K."/>
            <person name="Wong C."/>
            <person name="Yamamura Y."/>
            <person name="Yuan S."/>
            <person name="Shinozaki K."/>
            <person name="Davis R.W."/>
            <person name="Theologis A."/>
            <person name="Ecker J.R."/>
        </authorList>
    </citation>
    <scope>NUCLEOTIDE SEQUENCE [LARGE SCALE MRNA]</scope>
    <source>
        <strain>cv. Columbia</strain>
    </source>
</reference>